<evidence type="ECO:0000255" key="1">
    <source>
        <dbReference type="HAMAP-Rule" id="MF_00161"/>
    </source>
</evidence>
<gene>
    <name evidence="1" type="primary">lspA</name>
    <name type="ordered locus">SAOUHSC_01162</name>
</gene>
<protein>
    <recommendedName>
        <fullName evidence="1">Lipoprotein signal peptidase</fullName>
        <ecNumber evidence="1">3.4.23.36</ecNumber>
    </recommendedName>
    <alternativeName>
        <fullName evidence="1">Prolipoprotein signal peptidase</fullName>
    </alternativeName>
    <alternativeName>
        <fullName evidence="1">Signal peptidase II</fullName>
        <shortName evidence="1">SPase II</shortName>
    </alternativeName>
</protein>
<keyword id="KW-0064">Aspartyl protease</keyword>
<keyword id="KW-1003">Cell membrane</keyword>
<keyword id="KW-0378">Hydrolase</keyword>
<keyword id="KW-0472">Membrane</keyword>
<keyword id="KW-0645">Protease</keyword>
<keyword id="KW-1185">Reference proteome</keyword>
<keyword id="KW-0812">Transmembrane</keyword>
<keyword id="KW-1133">Transmembrane helix</keyword>
<feature type="chain" id="PRO_0000289432" description="Lipoprotein signal peptidase">
    <location>
        <begin position="1"/>
        <end position="163"/>
    </location>
</feature>
<feature type="transmembrane region" description="Helical" evidence="1">
    <location>
        <begin position="11"/>
        <end position="31"/>
    </location>
</feature>
<feature type="transmembrane region" description="Helical" evidence="1">
    <location>
        <begin position="63"/>
        <end position="83"/>
    </location>
</feature>
<feature type="transmembrane region" description="Helical" evidence="1">
    <location>
        <begin position="88"/>
        <end position="108"/>
    </location>
</feature>
<feature type="transmembrane region" description="Helical" evidence="1">
    <location>
        <begin position="131"/>
        <end position="151"/>
    </location>
</feature>
<feature type="active site" evidence="1">
    <location>
        <position position="118"/>
    </location>
</feature>
<feature type="active site" evidence="1">
    <location>
        <position position="136"/>
    </location>
</feature>
<organism>
    <name type="scientific">Staphylococcus aureus (strain NCTC 8325 / PS 47)</name>
    <dbReference type="NCBI Taxonomy" id="93061"/>
    <lineage>
        <taxon>Bacteria</taxon>
        <taxon>Bacillati</taxon>
        <taxon>Bacillota</taxon>
        <taxon>Bacilli</taxon>
        <taxon>Bacillales</taxon>
        <taxon>Staphylococcaceae</taxon>
        <taxon>Staphylococcus</taxon>
    </lineage>
</organism>
<sequence>MHKKYFIGTSILIAVFVVIFDQVTKYIIATTMKIGDSFEVIPHFLNITSHRNNGAAWGILSGKMTFFFIITIIILIALVYFFIKDAQYNLFMQVAISLLFAGALGNFIDRILTGEVVDFIDTNIFGYDFPIFNIADSSLTIGVILIIIALLKDTSNKKEKEVK</sequence>
<dbReference type="EC" id="3.4.23.36" evidence="1"/>
<dbReference type="EMBL" id="CP000253">
    <property type="protein sequence ID" value="ABD30270.1"/>
    <property type="molecule type" value="Genomic_DNA"/>
</dbReference>
<dbReference type="RefSeq" id="WP_000549207.1">
    <property type="nucleotide sequence ID" value="NZ_LS483365.1"/>
</dbReference>
<dbReference type="RefSeq" id="YP_499702.1">
    <property type="nucleotide sequence ID" value="NC_007795.1"/>
</dbReference>
<dbReference type="SMR" id="Q2FZ79"/>
<dbReference type="STRING" id="93061.SAOUHSC_01162"/>
<dbReference type="PaxDb" id="1280-SAXN108_1194"/>
<dbReference type="GeneID" id="3920914"/>
<dbReference type="KEGG" id="sao:SAOUHSC_01162"/>
<dbReference type="PATRIC" id="fig|93061.5.peg.1065"/>
<dbReference type="eggNOG" id="COG0597">
    <property type="taxonomic scope" value="Bacteria"/>
</dbReference>
<dbReference type="HOGENOM" id="CLU_083252_3_0_9"/>
<dbReference type="OrthoDB" id="9810259at2"/>
<dbReference type="UniPathway" id="UPA00665"/>
<dbReference type="PRO" id="PR:Q2FZ79"/>
<dbReference type="Proteomes" id="UP000008816">
    <property type="component" value="Chromosome"/>
</dbReference>
<dbReference type="GO" id="GO:0005886">
    <property type="term" value="C:plasma membrane"/>
    <property type="evidence" value="ECO:0000318"/>
    <property type="project" value="GO_Central"/>
</dbReference>
<dbReference type="GO" id="GO:0004190">
    <property type="term" value="F:aspartic-type endopeptidase activity"/>
    <property type="evidence" value="ECO:0007669"/>
    <property type="project" value="UniProtKB-UniRule"/>
</dbReference>
<dbReference type="GO" id="GO:0004175">
    <property type="term" value="F:endopeptidase activity"/>
    <property type="evidence" value="ECO:0000318"/>
    <property type="project" value="GO_Central"/>
</dbReference>
<dbReference type="GO" id="GO:0006508">
    <property type="term" value="P:proteolysis"/>
    <property type="evidence" value="ECO:0007669"/>
    <property type="project" value="UniProtKB-KW"/>
</dbReference>
<dbReference type="HAMAP" id="MF_00161">
    <property type="entry name" value="LspA"/>
    <property type="match status" value="1"/>
</dbReference>
<dbReference type="InterPro" id="IPR001872">
    <property type="entry name" value="Peptidase_A8"/>
</dbReference>
<dbReference type="NCBIfam" id="TIGR00077">
    <property type="entry name" value="lspA"/>
    <property type="match status" value="1"/>
</dbReference>
<dbReference type="PANTHER" id="PTHR33695">
    <property type="entry name" value="LIPOPROTEIN SIGNAL PEPTIDASE"/>
    <property type="match status" value="1"/>
</dbReference>
<dbReference type="PANTHER" id="PTHR33695:SF1">
    <property type="entry name" value="LIPOPROTEIN SIGNAL PEPTIDASE"/>
    <property type="match status" value="1"/>
</dbReference>
<dbReference type="Pfam" id="PF01252">
    <property type="entry name" value="Peptidase_A8"/>
    <property type="match status" value="1"/>
</dbReference>
<dbReference type="PRINTS" id="PR00781">
    <property type="entry name" value="LIPOSIGPTASE"/>
</dbReference>
<dbReference type="PROSITE" id="PS00855">
    <property type="entry name" value="SPASE_II"/>
    <property type="match status" value="1"/>
</dbReference>
<name>LSPA_STAA8</name>
<accession>Q2FZ79</accession>
<reference key="1">
    <citation type="book" date="2006" name="Gram positive pathogens, 2nd edition">
        <title>The Staphylococcus aureus NCTC 8325 genome.</title>
        <editorList>
            <person name="Fischetti V."/>
            <person name="Novick R."/>
            <person name="Ferretti J."/>
            <person name="Portnoy D."/>
            <person name="Rood J."/>
        </editorList>
        <authorList>
            <person name="Gillaspy A.F."/>
            <person name="Worrell V."/>
            <person name="Orvis J."/>
            <person name="Roe B.A."/>
            <person name="Dyer D.W."/>
            <person name="Iandolo J.J."/>
        </authorList>
    </citation>
    <scope>NUCLEOTIDE SEQUENCE [LARGE SCALE GENOMIC DNA]</scope>
    <source>
        <strain>NCTC 8325 / PS 47</strain>
    </source>
</reference>
<proteinExistence type="inferred from homology"/>
<comment type="function">
    <text evidence="1">This protein specifically catalyzes the removal of signal peptides from prolipoproteins.</text>
</comment>
<comment type="catalytic activity">
    <reaction evidence="1">
        <text>Release of signal peptides from bacterial membrane prolipoproteins. Hydrolyzes -Xaa-Yaa-Zaa-|-(S,diacylglyceryl)Cys-, in which Xaa is hydrophobic (preferably Leu), and Yaa (Ala or Ser) and Zaa (Gly or Ala) have small, neutral side chains.</text>
        <dbReference type="EC" id="3.4.23.36"/>
    </reaction>
</comment>
<comment type="pathway">
    <text evidence="1">Protein modification; lipoprotein biosynthesis (signal peptide cleavage).</text>
</comment>
<comment type="subcellular location">
    <subcellularLocation>
        <location evidence="1">Cell membrane</location>
        <topology evidence="1">Multi-pass membrane protein</topology>
    </subcellularLocation>
</comment>
<comment type="similarity">
    <text evidence="1">Belongs to the peptidase A8 family.</text>
</comment>